<accession>Q8W4D6</accession>
<proteinExistence type="evidence at protein level"/>
<name>HC173_ARATH</name>
<sequence>MVGSIVGSNMAATDARFLSSNFGNSFSINTRIHRFHDRSQIVIPRAQSSSSPSPSPPSDKKKTKTRPGTITTKESEETVAKKLDVAPPSPQSPPSPPTLKLDDVNPVGLGRRSRQIFDEVWRKFSGLGQMSRTTRPDEQETLDSLLIREGPMCEFAVPGAQNVTVLVVGATSRIGRIVVRKLMLRGYTVKALVRKQDEEVMSMLPRSVDIVVGDVGEPSTLKSAVESCSKIIYCATARSTITADLTRVDHLGVYNLTKAFQDYNNRLAQLRAGKSSKSKLLLAKFKSAESLDGWEIRQGTYFQDTTASKYDGGMDAKFEFTETERAEFSGYVFTRGGYVELSKKLSLPLGTTLDRYEGLVLSVGGNGRSYVVILEAGPSSDMSQSKQYFARISTKAGFCRVRVPFSAFRPVNPEDPPLDPFLVHTLTIRFEPKRQRPVDGLAGAQQDLRSFSLVFEYIKALPAGQETDFILVSCTGSGVEANRREQVLKAKRAGEDSLRRSGLGYTIIRPGPLKEEPGGQRALIFDQGNRISQGISCADVADICVKALHDSTARNKSFDVCHEYVAEQGIELYELVAHLPDKANNYLTPALSVLEKNT</sequence>
<organism>
    <name type="scientific">Arabidopsis thaliana</name>
    <name type="common">Mouse-ear cress</name>
    <dbReference type="NCBI Taxonomy" id="3702"/>
    <lineage>
        <taxon>Eukaryota</taxon>
        <taxon>Viridiplantae</taxon>
        <taxon>Streptophyta</taxon>
        <taxon>Embryophyta</taxon>
        <taxon>Tracheophyta</taxon>
        <taxon>Spermatophyta</taxon>
        <taxon>Magnoliopsida</taxon>
        <taxon>eudicotyledons</taxon>
        <taxon>Gunneridae</taxon>
        <taxon>Pentapetalae</taxon>
        <taxon>rosids</taxon>
        <taxon>malvids</taxon>
        <taxon>Brassicales</taxon>
        <taxon>Brassicaceae</taxon>
        <taxon>Camelineae</taxon>
        <taxon>Arabidopsis</taxon>
    </lineage>
</organism>
<keyword id="KW-0150">Chloroplast</keyword>
<keyword id="KW-0472">Membrane</keyword>
<keyword id="KW-0602">Photosynthesis</keyword>
<keyword id="KW-0604">Photosystem II</keyword>
<keyword id="KW-0934">Plastid</keyword>
<keyword id="KW-1185">Reference proteome</keyword>
<keyword id="KW-0793">Thylakoid</keyword>
<keyword id="KW-0809">Transit peptide</keyword>
<comment type="function">
    <text evidence="3 7">Auxiliary factor required, together with HCF244, for the biogenesis of photosystem II (PSII), especially for the synthesis of the reaction center proteins (e.g. D1), via the regulation of the corresponding mRNA (e.g. psbA) translation initiation (ribosomal loading) and stabilization.</text>
</comment>
<comment type="subunit">
    <text evidence="3 4 5 6">Component of a high molecular weight complex containing psbA mRNA, OHP1, OHP2 and HCF244, and PSII core proteins D1/D2, HCF136 and HCF173 (PubMed:17435084, PubMed:23027666, PubMed:29438089). Interacts with LPE1 (PubMed:29891689).</text>
</comment>
<comment type="subcellular location">
    <subcellularLocation>
        <location evidence="3">Plastid</location>
        <location evidence="3">Chloroplast membrane</location>
    </subcellularLocation>
    <subcellularLocation>
        <location evidence="4">Plastid</location>
        <location evidence="4">Chloroplast thylakoid membrane</location>
        <topology evidence="4">Peripheral membrane protein</topology>
        <orientation evidence="4">Stromal side</orientation>
    </subcellularLocation>
    <subcellularLocation>
        <location evidence="3">Plastid</location>
        <location evidence="3">Chloroplast stroma</location>
    </subcellularLocation>
    <text evidence="4">Predominantly present at thylakoid membranes.</text>
</comment>
<comment type="disruption phenotype">
    <text evidence="3 4 7">Impaired photoautotrophy (PubMed:17435084, PubMed:23027666). Seedling lethal (PubMed:23027666). High chlorophyll fluorescence phenotype and severely affected photosystem II (PSII) subunits accumulation associated with a drastically decreased synthesis of the reaction center protein D1 due to a reduced translation initiation (ribosomal loading) of the corresponding psbA mRNA (PubMed:17435084, PubMed:23027666, PubMed:30844105). Plants lacking both HCF173 and HCF244 display stronger PSII defects (PubMed:23027666).</text>
</comment>
<comment type="similarity">
    <text evidence="9">Belongs to the NmrA-type oxidoreductase family.</text>
</comment>
<protein>
    <recommendedName>
        <fullName evidence="8">Protein HIGH CHLOROPHYLL FLUORESCENCE PHENOTYPE 173, chloroplastic</fullName>
    </recommendedName>
</protein>
<feature type="transit peptide" description="Chloroplast" evidence="1">
    <location>
        <begin position="1"/>
        <end position="79"/>
    </location>
</feature>
<feature type="chain" id="PRO_0000447637" description="Protein HIGH CHLOROPHYLL FLUORESCENCE PHENOTYPE 173, chloroplastic">
    <location>
        <begin position="80"/>
        <end position="598"/>
    </location>
</feature>
<feature type="region of interest" description="Disordered" evidence="2">
    <location>
        <begin position="42"/>
        <end position="106"/>
    </location>
</feature>
<feature type="compositionally biased region" description="Basic and acidic residues" evidence="2">
    <location>
        <begin position="73"/>
        <end position="84"/>
    </location>
</feature>
<feature type="compositionally biased region" description="Pro residues" evidence="2">
    <location>
        <begin position="87"/>
        <end position="97"/>
    </location>
</feature>
<evidence type="ECO:0000255" key="1"/>
<evidence type="ECO:0000256" key="2">
    <source>
        <dbReference type="SAM" id="MobiDB-lite"/>
    </source>
</evidence>
<evidence type="ECO:0000269" key="3">
    <source>
    </source>
</evidence>
<evidence type="ECO:0000269" key="4">
    <source>
    </source>
</evidence>
<evidence type="ECO:0000269" key="5">
    <source>
    </source>
</evidence>
<evidence type="ECO:0000269" key="6">
    <source>
    </source>
</evidence>
<evidence type="ECO:0000269" key="7">
    <source>
    </source>
</evidence>
<evidence type="ECO:0000303" key="8">
    <source>
    </source>
</evidence>
<evidence type="ECO:0000305" key="9"/>
<evidence type="ECO:0000312" key="10">
    <source>
        <dbReference type="Araport" id="AT1G16720"/>
    </source>
</evidence>
<evidence type="ECO:0000312" key="11">
    <source>
        <dbReference type="EMBL" id="AEE29489.1"/>
    </source>
</evidence>
<gene>
    <name evidence="8" type="primary">HCF173</name>
    <name evidence="10" type="ordered locus">At1g16720</name>
    <name evidence="11" type="ORF">F19K19.14</name>
</gene>
<dbReference type="EMBL" id="AC011808">
    <property type="status" value="NOT_ANNOTATED_CDS"/>
    <property type="molecule type" value="Genomic_DNA"/>
</dbReference>
<dbReference type="EMBL" id="CP002684">
    <property type="protein sequence ID" value="AEE29489.1"/>
    <property type="molecule type" value="Genomic_DNA"/>
</dbReference>
<dbReference type="EMBL" id="AY062632">
    <property type="protein sequence ID" value="AAL32710.1"/>
    <property type="molecule type" value="mRNA"/>
</dbReference>
<dbReference type="EMBL" id="AY128723">
    <property type="protein sequence ID" value="AAM91123.1"/>
    <property type="molecule type" value="mRNA"/>
</dbReference>
<dbReference type="RefSeq" id="NP_173116.1">
    <property type="nucleotide sequence ID" value="NM_101533.4"/>
</dbReference>
<dbReference type="SMR" id="Q8W4D6"/>
<dbReference type="FunCoup" id="Q8W4D6">
    <property type="interactions" value="1408"/>
</dbReference>
<dbReference type="IntAct" id="Q8W4D6">
    <property type="interactions" value="1"/>
</dbReference>
<dbReference type="STRING" id="3702.Q8W4D6"/>
<dbReference type="iPTMnet" id="Q8W4D6"/>
<dbReference type="PaxDb" id="3702-AT1G16720.1"/>
<dbReference type="EnsemblPlants" id="AT1G16720.1">
    <property type="protein sequence ID" value="AT1G16720.1"/>
    <property type="gene ID" value="AT1G16720"/>
</dbReference>
<dbReference type="GeneID" id="838243"/>
<dbReference type="Gramene" id="AT1G16720.1">
    <property type="protein sequence ID" value="AT1G16720.1"/>
    <property type="gene ID" value="AT1G16720"/>
</dbReference>
<dbReference type="KEGG" id="ath:AT1G16720"/>
<dbReference type="Araport" id="AT1G16720"/>
<dbReference type="TAIR" id="AT1G16720">
    <property type="gene designation" value="HCF173"/>
</dbReference>
<dbReference type="eggNOG" id="KOG1203">
    <property type="taxonomic scope" value="Eukaryota"/>
</dbReference>
<dbReference type="HOGENOM" id="CLU_029746_0_0_1"/>
<dbReference type="InParanoid" id="Q8W4D6"/>
<dbReference type="OMA" id="HTMTIRF"/>
<dbReference type="PhylomeDB" id="Q8W4D6"/>
<dbReference type="PRO" id="PR:Q8W4D6"/>
<dbReference type="Proteomes" id="UP000006548">
    <property type="component" value="Chromosome 1"/>
</dbReference>
<dbReference type="ExpressionAtlas" id="Q8W4D6">
    <property type="expression patterns" value="baseline and differential"/>
</dbReference>
<dbReference type="GO" id="GO:0009507">
    <property type="term" value="C:chloroplast"/>
    <property type="evidence" value="ECO:0007005"/>
    <property type="project" value="TAIR"/>
</dbReference>
<dbReference type="GO" id="GO:0009941">
    <property type="term" value="C:chloroplast envelope"/>
    <property type="evidence" value="ECO:0007005"/>
    <property type="project" value="TAIR"/>
</dbReference>
<dbReference type="GO" id="GO:0031969">
    <property type="term" value="C:chloroplast membrane"/>
    <property type="evidence" value="ECO:0000314"/>
    <property type="project" value="UniProtKB"/>
</dbReference>
<dbReference type="GO" id="GO:0009570">
    <property type="term" value="C:chloroplast stroma"/>
    <property type="evidence" value="ECO:0000314"/>
    <property type="project" value="UniProtKB"/>
</dbReference>
<dbReference type="GO" id="GO:0009535">
    <property type="term" value="C:chloroplast thylakoid membrane"/>
    <property type="evidence" value="ECO:0007669"/>
    <property type="project" value="UniProtKB-SubCell"/>
</dbReference>
<dbReference type="GO" id="GO:0009523">
    <property type="term" value="C:photosystem II"/>
    <property type="evidence" value="ECO:0007669"/>
    <property type="project" value="UniProtKB-KW"/>
</dbReference>
<dbReference type="GO" id="GO:0042651">
    <property type="term" value="C:thylakoid membrane"/>
    <property type="evidence" value="ECO:0000314"/>
    <property type="project" value="UniProtKB"/>
</dbReference>
<dbReference type="GO" id="GO:0003729">
    <property type="term" value="F:mRNA binding"/>
    <property type="evidence" value="ECO:0000314"/>
    <property type="project" value="TAIR"/>
</dbReference>
<dbReference type="GO" id="GO:0003723">
    <property type="term" value="F:RNA binding"/>
    <property type="evidence" value="ECO:0000353"/>
    <property type="project" value="TAIR"/>
</dbReference>
<dbReference type="GO" id="GO:0010207">
    <property type="term" value="P:photosystem II assembly"/>
    <property type="evidence" value="ECO:0000315"/>
    <property type="project" value="UniProtKB"/>
</dbReference>
<dbReference type="GO" id="GO:0006413">
    <property type="term" value="P:translational initiation"/>
    <property type="evidence" value="ECO:0000315"/>
    <property type="project" value="UniProtKB"/>
</dbReference>
<dbReference type="FunFam" id="3.40.50.720:FF:000952">
    <property type="entry name" value="Oxidoreductase/ transcriptional repressor"/>
    <property type="match status" value="1"/>
</dbReference>
<dbReference type="Gene3D" id="3.40.50.720">
    <property type="entry name" value="NAD(P)-binding Rossmann-like Domain"/>
    <property type="match status" value="2"/>
</dbReference>
<dbReference type="InterPro" id="IPR008979">
    <property type="entry name" value="Galactose-bd-like_sf"/>
</dbReference>
<dbReference type="InterPro" id="IPR016040">
    <property type="entry name" value="NAD(P)-bd_dom"/>
</dbReference>
<dbReference type="InterPro" id="IPR036291">
    <property type="entry name" value="NAD(P)-bd_dom_sf"/>
</dbReference>
<dbReference type="InterPro" id="IPR013857">
    <property type="entry name" value="NADH-UbQ_OxRdtase-assoc_prot30"/>
</dbReference>
<dbReference type="PANTHER" id="PTHR15020">
    <property type="entry name" value="FLAVIN REDUCTASE-RELATED"/>
    <property type="match status" value="1"/>
</dbReference>
<dbReference type="PANTHER" id="PTHR15020:SF47">
    <property type="entry name" value="NAD(P)-BINDING DOMAIN-CONTAINING PROTEIN"/>
    <property type="match status" value="1"/>
</dbReference>
<dbReference type="Pfam" id="PF08547">
    <property type="entry name" value="CIA30"/>
    <property type="match status" value="1"/>
</dbReference>
<dbReference type="Pfam" id="PF13460">
    <property type="entry name" value="NAD_binding_10"/>
    <property type="match status" value="2"/>
</dbReference>
<dbReference type="SUPFAM" id="SSF49785">
    <property type="entry name" value="Galactose-binding domain-like"/>
    <property type="match status" value="1"/>
</dbReference>
<dbReference type="SUPFAM" id="SSF51735">
    <property type="entry name" value="NAD(P)-binding Rossmann-fold domains"/>
    <property type="match status" value="1"/>
</dbReference>
<reference key="1">
    <citation type="journal article" date="2000" name="Nature">
        <title>Sequence and analysis of chromosome 1 of the plant Arabidopsis thaliana.</title>
        <authorList>
            <person name="Theologis A."/>
            <person name="Ecker J.R."/>
            <person name="Palm C.J."/>
            <person name="Federspiel N.A."/>
            <person name="Kaul S."/>
            <person name="White O."/>
            <person name="Alonso J."/>
            <person name="Altafi H."/>
            <person name="Araujo R."/>
            <person name="Bowman C.L."/>
            <person name="Brooks S.Y."/>
            <person name="Buehler E."/>
            <person name="Chan A."/>
            <person name="Chao Q."/>
            <person name="Chen H."/>
            <person name="Cheuk R.F."/>
            <person name="Chin C.W."/>
            <person name="Chung M.K."/>
            <person name="Conn L."/>
            <person name="Conway A.B."/>
            <person name="Conway A.R."/>
            <person name="Creasy T.H."/>
            <person name="Dewar K."/>
            <person name="Dunn P."/>
            <person name="Etgu P."/>
            <person name="Feldblyum T.V."/>
            <person name="Feng J.-D."/>
            <person name="Fong B."/>
            <person name="Fujii C.Y."/>
            <person name="Gill J.E."/>
            <person name="Goldsmith A.D."/>
            <person name="Haas B."/>
            <person name="Hansen N.F."/>
            <person name="Hughes B."/>
            <person name="Huizar L."/>
            <person name="Hunter J.L."/>
            <person name="Jenkins J."/>
            <person name="Johnson-Hopson C."/>
            <person name="Khan S."/>
            <person name="Khaykin E."/>
            <person name="Kim C.J."/>
            <person name="Koo H.L."/>
            <person name="Kremenetskaia I."/>
            <person name="Kurtz D.B."/>
            <person name="Kwan A."/>
            <person name="Lam B."/>
            <person name="Langin-Hooper S."/>
            <person name="Lee A."/>
            <person name="Lee J.M."/>
            <person name="Lenz C.A."/>
            <person name="Li J.H."/>
            <person name="Li Y.-P."/>
            <person name="Lin X."/>
            <person name="Liu S.X."/>
            <person name="Liu Z.A."/>
            <person name="Luros J.S."/>
            <person name="Maiti R."/>
            <person name="Marziali A."/>
            <person name="Militscher J."/>
            <person name="Miranda M."/>
            <person name="Nguyen M."/>
            <person name="Nierman W.C."/>
            <person name="Osborne B.I."/>
            <person name="Pai G."/>
            <person name="Peterson J."/>
            <person name="Pham P.K."/>
            <person name="Rizzo M."/>
            <person name="Rooney T."/>
            <person name="Rowley D."/>
            <person name="Sakano H."/>
            <person name="Salzberg S.L."/>
            <person name="Schwartz J.R."/>
            <person name="Shinn P."/>
            <person name="Southwick A.M."/>
            <person name="Sun H."/>
            <person name="Tallon L.J."/>
            <person name="Tambunga G."/>
            <person name="Toriumi M.J."/>
            <person name="Town C.D."/>
            <person name="Utterback T."/>
            <person name="Van Aken S."/>
            <person name="Vaysberg M."/>
            <person name="Vysotskaia V.S."/>
            <person name="Walker M."/>
            <person name="Wu D."/>
            <person name="Yu G."/>
            <person name="Fraser C.M."/>
            <person name="Venter J.C."/>
            <person name="Davis R.W."/>
        </authorList>
    </citation>
    <scope>NUCLEOTIDE SEQUENCE [LARGE SCALE GENOMIC DNA]</scope>
    <source>
        <strain>cv. Columbia</strain>
    </source>
</reference>
<reference key="2">
    <citation type="journal article" date="2017" name="Plant J.">
        <title>Araport11: a complete reannotation of the Arabidopsis thaliana reference genome.</title>
        <authorList>
            <person name="Cheng C.Y."/>
            <person name="Krishnakumar V."/>
            <person name="Chan A.P."/>
            <person name="Thibaud-Nissen F."/>
            <person name="Schobel S."/>
            <person name="Town C.D."/>
        </authorList>
    </citation>
    <scope>GENOME REANNOTATION</scope>
    <source>
        <strain>cv. Columbia</strain>
    </source>
</reference>
<reference key="3">
    <citation type="journal article" date="2003" name="Science">
        <title>Empirical analysis of transcriptional activity in the Arabidopsis genome.</title>
        <authorList>
            <person name="Yamada K."/>
            <person name="Lim J."/>
            <person name="Dale J.M."/>
            <person name="Chen H."/>
            <person name="Shinn P."/>
            <person name="Palm C.J."/>
            <person name="Southwick A.M."/>
            <person name="Wu H.C."/>
            <person name="Kim C.J."/>
            <person name="Nguyen M."/>
            <person name="Pham P.K."/>
            <person name="Cheuk R.F."/>
            <person name="Karlin-Newmann G."/>
            <person name="Liu S.X."/>
            <person name="Lam B."/>
            <person name="Sakano H."/>
            <person name="Wu T."/>
            <person name="Yu G."/>
            <person name="Miranda M."/>
            <person name="Quach H.L."/>
            <person name="Tripp M."/>
            <person name="Chang C.H."/>
            <person name="Lee J.M."/>
            <person name="Toriumi M.J."/>
            <person name="Chan M.M."/>
            <person name="Tang C.C."/>
            <person name="Onodera C.S."/>
            <person name="Deng J.M."/>
            <person name="Akiyama K."/>
            <person name="Ansari Y."/>
            <person name="Arakawa T."/>
            <person name="Banh J."/>
            <person name="Banno F."/>
            <person name="Bowser L."/>
            <person name="Brooks S.Y."/>
            <person name="Carninci P."/>
            <person name="Chao Q."/>
            <person name="Choy N."/>
            <person name="Enju A."/>
            <person name="Goldsmith A.D."/>
            <person name="Gurjal M."/>
            <person name="Hansen N.F."/>
            <person name="Hayashizaki Y."/>
            <person name="Johnson-Hopson C."/>
            <person name="Hsuan V.W."/>
            <person name="Iida K."/>
            <person name="Karnes M."/>
            <person name="Khan S."/>
            <person name="Koesema E."/>
            <person name="Ishida J."/>
            <person name="Jiang P.X."/>
            <person name="Jones T."/>
            <person name="Kawai J."/>
            <person name="Kamiya A."/>
            <person name="Meyers C."/>
            <person name="Nakajima M."/>
            <person name="Narusaka M."/>
            <person name="Seki M."/>
            <person name="Sakurai T."/>
            <person name="Satou M."/>
            <person name="Tamse R."/>
            <person name="Vaysberg M."/>
            <person name="Wallender E.K."/>
            <person name="Wong C."/>
            <person name="Yamamura Y."/>
            <person name="Yuan S."/>
            <person name="Shinozaki K."/>
            <person name="Davis R.W."/>
            <person name="Theologis A."/>
            <person name="Ecker J.R."/>
        </authorList>
    </citation>
    <scope>NUCLEOTIDE SEQUENCE [LARGE SCALE MRNA]</scope>
    <source>
        <strain>cv. Columbia</strain>
    </source>
</reference>
<reference key="4">
    <citation type="journal article" date="2007" name="Plant Cell">
        <title>The nuclear-encoded factor HCF173 is involved in the initiation of translation of the psbA mRNA in Arabidopsis thaliana.</title>
        <authorList>
            <person name="Schult K."/>
            <person name="Meierhoff K."/>
            <person name="Paradies S."/>
            <person name="Toeller T."/>
            <person name="Wolff P."/>
            <person name="Westhoff P."/>
        </authorList>
    </citation>
    <scope>FUNCTION</scope>
    <scope>DISRUPTION PHENOTYPE</scope>
    <scope>SUBCELLULAR LOCATION</scope>
    <scope>SUBUNIT</scope>
</reference>
<reference key="5">
    <citation type="journal article" date="2012" name="Plant Physiol.">
        <title>The atypical short-chain dehydrogenases HCF173 and HCF244 are jointly involved in translational initiation of the psbA mRNA of Arabidopsis.</title>
        <authorList>
            <person name="Link S."/>
            <person name="Engelmann K."/>
            <person name="Meierhoff K."/>
            <person name="Westhoff P."/>
        </authorList>
    </citation>
    <scope>FUNCTION</scope>
    <scope>DISRUPTION PHENOTYPE</scope>
    <scope>SUBCELLULAR LOCATION</scope>
    <scope>SUBUNIT</scope>
</reference>
<reference key="6">
    <citation type="journal article" date="2016" name="Front. Plant Sci.">
        <title>Identification and roles of photosystem II assembly, stability, and repair factors in Arabidopsis.</title>
        <authorList>
            <person name="Lu Y."/>
        </authorList>
    </citation>
    <scope>REVIEW ON PHOTOSYSTEM II ASSEMBLY</scope>
</reference>
<reference key="7">
    <citation type="journal article" date="2018" name="Plant Physiol.">
        <title>Stable accumulation of photosystem II requires ONE-HELIX PROTEIN1 (OHP1) of the light harvesting-like family.</title>
        <authorList>
            <person name="Myouga F."/>
            <person name="Takahashi K."/>
            <person name="Tanaka R."/>
            <person name="Nagata N."/>
            <person name="Kiss A.Z."/>
            <person name="Funk C."/>
            <person name="Nomura Y."/>
            <person name="Nakagami H."/>
            <person name="Jansson S."/>
            <person name="Shinozaki K."/>
        </authorList>
    </citation>
    <scope>SUBUNIT</scope>
    <source>
        <strain>cv. Columbia</strain>
    </source>
</reference>
<reference key="8">
    <citation type="journal article" date="2018" name="Proc. Natl. Acad. Sci. U.S.A.">
        <title>LOW PHOTOSYNTHETIC EFFICIENCY 1 is required for light-regulated photosystem II biogenesis in Arabidopsis.</title>
        <authorList>
            <person name="Jin H."/>
            <person name="Fu M."/>
            <person name="Duan Z."/>
            <person name="Duan S."/>
            <person name="Li M."/>
            <person name="Dong X."/>
            <person name="Liu B."/>
            <person name="Feng D."/>
            <person name="Wang J."/>
            <person name="Peng L."/>
            <person name="Wang H.-B."/>
        </authorList>
    </citation>
    <scope>INTERACTION WITH LPE1</scope>
    <source>
        <strain>cv. Columbia</strain>
    </source>
</reference>
<reference key="9">
    <citation type="journal article" date="2019" name="Plant J.">
        <title>The Arabidopsis pentatricopeptide repeat protein LPE1 and its maize ortholog are required for translation of the chloroplast psbJ RNA.</title>
        <authorList>
            <person name="Williams-Carrier R."/>
            <person name="Brewster C."/>
            <person name="Belcher S.E."/>
            <person name="Rojas M."/>
            <person name="Chotewutmontri P."/>
            <person name="Ljungdahl S."/>
            <person name="Barkan A."/>
        </authorList>
    </citation>
    <scope>FUNCTION</scope>
    <scope>DISRUPTION PHENOTYPE</scope>
</reference>